<proteinExistence type="inferred from homology"/>
<gene>
    <name evidence="1" type="primary">rplU</name>
    <name type="ordered locus">spyM18_0883</name>
</gene>
<accession>Q7CNC3</accession>
<feature type="chain" id="PRO_0000269396" description="Large ribosomal subunit protein bL21">
    <location>
        <begin position="1"/>
        <end position="104"/>
    </location>
</feature>
<keyword id="KW-0687">Ribonucleoprotein</keyword>
<keyword id="KW-0689">Ribosomal protein</keyword>
<keyword id="KW-0694">RNA-binding</keyword>
<keyword id="KW-0699">rRNA-binding</keyword>
<sequence length="104" mass="11155">MSTYAIIKTGGKQVKVEVGQAIYVEKIDAEAGAEVTFNEVVLVGGDKTVVGTPVVEGATVVGTVEKQGKQKKVVTFKYKPKKGSHRKQGHRQPYTKVVINAINA</sequence>
<protein>
    <recommendedName>
        <fullName evidence="1">Large ribosomal subunit protein bL21</fullName>
    </recommendedName>
    <alternativeName>
        <fullName evidence="2">50S ribosomal protein L21</fullName>
    </alternativeName>
</protein>
<name>RL21_STRP8</name>
<reference key="1">
    <citation type="journal article" date="2002" name="Proc. Natl. Acad. Sci. U.S.A.">
        <title>Genome sequence and comparative microarray analysis of serotype M18 group A Streptococcus strains associated with acute rheumatic fever outbreaks.</title>
        <authorList>
            <person name="Smoot J.C."/>
            <person name="Barbian K.D."/>
            <person name="Van Gompel J.J."/>
            <person name="Smoot L.M."/>
            <person name="Chaussee M.S."/>
            <person name="Sylva G.L."/>
            <person name="Sturdevant D.E."/>
            <person name="Ricklefs S.M."/>
            <person name="Porcella S.F."/>
            <person name="Parkins L.D."/>
            <person name="Beres S.B."/>
            <person name="Campbell D.S."/>
            <person name="Smith T.M."/>
            <person name="Zhang Q."/>
            <person name="Kapur V."/>
            <person name="Daly J.A."/>
            <person name="Veasy L.G."/>
            <person name="Musser J.M."/>
        </authorList>
    </citation>
    <scope>NUCLEOTIDE SEQUENCE [LARGE SCALE GENOMIC DNA]</scope>
    <source>
        <strain>MGAS8232</strain>
    </source>
</reference>
<evidence type="ECO:0000255" key="1">
    <source>
        <dbReference type="HAMAP-Rule" id="MF_01363"/>
    </source>
</evidence>
<evidence type="ECO:0000305" key="2"/>
<comment type="function">
    <text evidence="1">This protein binds to 23S rRNA in the presence of protein L20.</text>
</comment>
<comment type="subunit">
    <text evidence="1">Part of the 50S ribosomal subunit. Contacts protein L20.</text>
</comment>
<comment type="similarity">
    <text evidence="1">Belongs to the bacterial ribosomal protein bL21 family.</text>
</comment>
<organism>
    <name type="scientific">Streptococcus pyogenes serotype M18 (strain MGAS8232)</name>
    <dbReference type="NCBI Taxonomy" id="186103"/>
    <lineage>
        <taxon>Bacteria</taxon>
        <taxon>Bacillati</taxon>
        <taxon>Bacillota</taxon>
        <taxon>Bacilli</taxon>
        <taxon>Lactobacillales</taxon>
        <taxon>Streptococcaceae</taxon>
        <taxon>Streptococcus</taxon>
    </lineage>
</organism>
<dbReference type="EMBL" id="AE009949">
    <property type="protein sequence ID" value="AAL97535.1"/>
    <property type="molecule type" value="Genomic_DNA"/>
</dbReference>
<dbReference type="RefSeq" id="WP_002985116.1">
    <property type="nucleotide sequence ID" value="NC_003485.1"/>
</dbReference>
<dbReference type="SMR" id="Q7CNC3"/>
<dbReference type="GeneID" id="83690429"/>
<dbReference type="KEGG" id="spm:spyM18_0883"/>
<dbReference type="HOGENOM" id="CLU_061463_3_1_9"/>
<dbReference type="GO" id="GO:0005737">
    <property type="term" value="C:cytoplasm"/>
    <property type="evidence" value="ECO:0007669"/>
    <property type="project" value="UniProtKB-ARBA"/>
</dbReference>
<dbReference type="GO" id="GO:1990904">
    <property type="term" value="C:ribonucleoprotein complex"/>
    <property type="evidence" value="ECO:0007669"/>
    <property type="project" value="UniProtKB-KW"/>
</dbReference>
<dbReference type="GO" id="GO:0005840">
    <property type="term" value="C:ribosome"/>
    <property type="evidence" value="ECO:0007669"/>
    <property type="project" value="UniProtKB-KW"/>
</dbReference>
<dbReference type="GO" id="GO:0019843">
    <property type="term" value="F:rRNA binding"/>
    <property type="evidence" value="ECO:0007669"/>
    <property type="project" value="UniProtKB-UniRule"/>
</dbReference>
<dbReference type="GO" id="GO:0003735">
    <property type="term" value="F:structural constituent of ribosome"/>
    <property type="evidence" value="ECO:0007669"/>
    <property type="project" value="InterPro"/>
</dbReference>
<dbReference type="GO" id="GO:0006412">
    <property type="term" value="P:translation"/>
    <property type="evidence" value="ECO:0007669"/>
    <property type="project" value="UniProtKB-UniRule"/>
</dbReference>
<dbReference type="HAMAP" id="MF_01363">
    <property type="entry name" value="Ribosomal_bL21"/>
    <property type="match status" value="1"/>
</dbReference>
<dbReference type="InterPro" id="IPR028909">
    <property type="entry name" value="bL21-like"/>
</dbReference>
<dbReference type="InterPro" id="IPR036164">
    <property type="entry name" value="bL21-like_sf"/>
</dbReference>
<dbReference type="InterPro" id="IPR001787">
    <property type="entry name" value="Ribosomal_bL21"/>
</dbReference>
<dbReference type="InterPro" id="IPR018258">
    <property type="entry name" value="Ribosomal_bL21_CS"/>
</dbReference>
<dbReference type="NCBIfam" id="TIGR00061">
    <property type="entry name" value="L21"/>
    <property type="match status" value="1"/>
</dbReference>
<dbReference type="PANTHER" id="PTHR21349">
    <property type="entry name" value="50S RIBOSOMAL PROTEIN L21"/>
    <property type="match status" value="1"/>
</dbReference>
<dbReference type="PANTHER" id="PTHR21349:SF0">
    <property type="entry name" value="LARGE RIBOSOMAL SUBUNIT PROTEIN BL21M"/>
    <property type="match status" value="1"/>
</dbReference>
<dbReference type="Pfam" id="PF00829">
    <property type="entry name" value="Ribosomal_L21p"/>
    <property type="match status" value="1"/>
</dbReference>
<dbReference type="SUPFAM" id="SSF141091">
    <property type="entry name" value="L21p-like"/>
    <property type="match status" value="1"/>
</dbReference>
<dbReference type="PROSITE" id="PS01169">
    <property type="entry name" value="RIBOSOMAL_L21"/>
    <property type="match status" value="1"/>
</dbReference>